<sequence length="308" mass="32909">MKPKIFIDGEHGTTGLQIRALLAERGDLEIISIPTERRKETAARAEFLNAADIAILCLPDDAAKESVSLITNDTTKVIDASTAHRVAEGWAYGFAEMDKEQAKAIATAKRVANPGCWPQGPIATLRPLVTSGLLPADFPITVNGISGYSGGGRPMIEDYVAKGEDASEFLPYGLTLQHKHVPELRAYAKLSHDPIMQPAVGNFAQGMITVVPLQLGGLDSVPTGAELHAAIADHFAAIKGGVVEVAPYAHLERMPEIDPEIYNGTNRMKVYVFANDKRAQALLLAVYDNLGKGASGAAVQNMDLMLGL</sequence>
<gene>
    <name evidence="1" type="primary">argC</name>
    <name type="ordered locus">mll8452</name>
</gene>
<evidence type="ECO:0000255" key="1">
    <source>
        <dbReference type="HAMAP-Rule" id="MF_01110"/>
    </source>
</evidence>
<feature type="chain" id="PRO_0000112511" description="N-acetyl-gamma-glutamyl-phosphate reductase">
    <location>
        <begin position="1"/>
        <end position="308"/>
    </location>
</feature>
<feature type="active site" evidence="1">
    <location>
        <position position="116"/>
    </location>
</feature>
<organism>
    <name type="scientific">Mesorhizobium japonicum (strain LMG 29417 / CECT 9101 / MAFF 303099)</name>
    <name type="common">Mesorhizobium loti (strain MAFF 303099)</name>
    <dbReference type="NCBI Taxonomy" id="266835"/>
    <lineage>
        <taxon>Bacteria</taxon>
        <taxon>Pseudomonadati</taxon>
        <taxon>Pseudomonadota</taxon>
        <taxon>Alphaproteobacteria</taxon>
        <taxon>Hyphomicrobiales</taxon>
        <taxon>Phyllobacteriaceae</taxon>
        <taxon>Mesorhizobium</taxon>
    </lineage>
</organism>
<accession>Q982X3</accession>
<dbReference type="EC" id="1.2.1.38" evidence="1"/>
<dbReference type="EMBL" id="BA000012">
    <property type="protein sequence ID" value="BAB54333.1"/>
    <property type="molecule type" value="Genomic_DNA"/>
</dbReference>
<dbReference type="RefSeq" id="WP_010915633.1">
    <property type="nucleotide sequence ID" value="NC_002678.2"/>
</dbReference>
<dbReference type="SMR" id="Q982X3"/>
<dbReference type="KEGG" id="mlo:mll8452"/>
<dbReference type="PATRIC" id="fig|266835.9.peg.6762"/>
<dbReference type="eggNOG" id="COG0002">
    <property type="taxonomic scope" value="Bacteria"/>
</dbReference>
<dbReference type="HOGENOM" id="CLU_077118_0_0_5"/>
<dbReference type="UniPathway" id="UPA00068">
    <property type="reaction ID" value="UER00108"/>
</dbReference>
<dbReference type="Proteomes" id="UP000000552">
    <property type="component" value="Chromosome"/>
</dbReference>
<dbReference type="GO" id="GO:0005737">
    <property type="term" value="C:cytoplasm"/>
    <property type="evidence" value="ECO:0007669"/>
    <property type="project" value="UniProtKB-SubCell"/>
</dbReference>
<dbReference type="GO" id="GO:0003942">
    <property type="term" value="F:N-acetyl-gamma-glutamyl-phosphate reductase activity"/>
    <property type="evidence" value="ECO:0007669"/>
    <property type="project" value="UniProtKB-UniRule"/>
</dbReference>
<dbReference type="GO" id="GO:0051287">
    <property type="term" value="F:NAD binding"/>
    <property type="evidence" value="ECO:0007669"/>
    <property type="project" value="InterPro"/>
</dbReference>
<dbReference type="GO" id="GO:0006526">
    <property type="term" value="P:L-arginine biosynthetic process"/>
    <property type="evidence" value="ECO:0007669"/>
    <property type="project" value="UniProtKB-UniRule"/>
</dbReference>
<dbReference type="CDD" id="cd23935">
    <property type="entry name" value="AGPR_2_C"/>
    <property type="match status" value="1"/>
</dbReference>
<dbReference type="CDD" id="cd17896">
    <property type="entry name" value="AGPR_2_N"/>
    <property type="match status" value="1"/>
</dbReference>
<dbReference type="Gene3D" id="3.30.360.10">
    <property type="entry name" value="Dihydrodipicolinate Reductase, domain 2"/>
    <property type="match status" value="1"/>
</dbReference>
<dbReference type="Gene3D" id="3.40.50.720">
    <property type="entry name" value="NAD(P)-binding Rossmann-like Domain"/>
    <property type="match status" value="1"/>
</dbReference>
<dbReference type="HAMAP" id="MF_01110">
    <property type="entry name" value="ArgC_type2"/>
    <property type="match status" value="1"/>
</dbReference>
<dbReference type="InterPro" id="IPR010136">
    <property type="entry name" value="AGPR_type-2"/>
</dbReference>
<dbReference type="InterPro" id="IPR036291">
    <property type="entry name" value="NAD(P)-bd_dom_sf"/>
</dbReference>
<dbReference type="InterPro" id="IPR050085">
    <property type="entry name" value="NAGSA_dehydrogenase"/>
</dbReference>
<dbReference type="InterPro" id="IPR000534">
    <property type="entry name" value="Semialdehyde_DH_NAD-bd"/>
</dbReference>
<dbReference type="NCBIfam" id="TIGR01851">
    <property type="entry name" value="argC_other"/>
    <property type="match status" value="1"/>
</dbReference>
<dbReference type="PANTHER" id="PTHR32338:SF10">
    <property type="entry name" value="N-ACETYL-GAMMA-GLUTAMYL-PHOSPHATE REDUCTASE, CHLOROPLASTIC-RELATED"/>
    <property type="match status" value="1"/>
</dbReference>
<dbReference type="PANTHER" id="PTHR32338">
    <property type="entry name" value="N-ACETYL-GAMMA-GLUTAMYL-PHOSPHATE REDUCTASE, CHLOROPLASTIC-RELATED-RELATED"/>
    <property type="match status" value="1"/>
</dbReference>
<dbReference type="Pfam" id="PF01118">
    <property type="entry name" value="Semialdhyde_dh"/>
    <property type="match status" value="1"/>
</dbReference>
<dbReference type="Pfam" id="PF22698">
    <property type="entry name" value="Semialdhyde_dhC_1"/>
    <property type="match status" value="1"/>
</dbReference>
<dbReference type="SMART" id="SM00859">
    <property type="entry name" value="Semialdhyde_dh"/>
    <property type="match status" value="1"/>
</dbReference>
<dbReference type="SUPFAM" id="SSF55347">
    <property type="entry name" value="Glyceraldehyde-3-phosphate dehydrogenase-like, C-terminal domain"/>
    <property type="match status" value="1"/>
</dbReference>
<dbReference type="SUPFAM" id="SSF51735">
    <property type="entry name" value="NAD(P)-binding Rossmann-fold domains"/>
    <property type="match status" value="1"/>
</dbReference>
<protein>
    <recommendedName>
        <fullName evidence="1">N-acetyl-gamma-glutamyl-phosphate reductase</fullName>
        <shortName evidence="1">AGPR</shortName>
        <ecNumber evidence="1">1.2.1.38</ecNumber>
    </recommendedName>
    <alternativeName>
        <fullName evidence="1">N-acetyl-glutamate semialdehyde dehydrogenase</fullName>
        <shortName evidence="1">NAGSA dehydrogenase</shortName>
    </alternativeName>
</protein>
<name>ARGC_RHILO</name>
<proteinExistence type="inferred from homology"/>
<keyword id="KW-0028">Amino-acid biosynthesis</keyword>
<keyword id="KW-0055">Arginine biosynthesis</keyword>
<keyword id="KW-0963">Cytoplasm</keyword>
<keyword id="KW-0521">NADP</keyword>
<keyword id="KW-0560">Oxidoreductase</keyword>
<comment type="function">
    <text evidence="1">Catalyzes the NADPH-dependent reduction of N-acetyl-5-glutamyl phosphate to yield N-acetyl-L-glutamate 5-semialdehyde.</text>
</comment>
<comment type="catalytic activity">
    <reaction evidence="1">
        <text>N-acetyl-L-glutamate 5-semialdehyde + phosphate + NADP(+) = N-acetyl-L-glutamyl 5-phosphate + NADPH + H(+)</text>
        <dbReference type="Rhea" id="RHEA:21588"/>
        <dbReference type="ChEBI" id="CHEBI:15378"/>
        <dbReference type="ChEBI" id="CHEBI:29123"/>
        <dbReference type="ChEBI" id="CHEBI:43474"/>
        <dbReference type="ChEBI" id="CHEBI:57783"/>
        <dbReference type="ChEBI" id="CHEBI:57936"/>
        <dbReference type="ChEBI" id="CHEBI:58349"/>
        <dbReference type="EC" id="1.2.1.38"/>
    </reaction>
</comment>
<comment type="pathway">
    <text evidence="1">Amino-acid biosynthesis; L-arginine biosynthesis; N(2)-acetyl-L-ornithine from L-glutamate: step 3/4.</text>
</comment>
<comment type="subcellular location">
    <subcellularLocation>
        <location evidence="1">Cytoplasm</location>
    </subcellularLocation>
</comment>
<comment type="similarity">
    <text evidence="1">Belongs to the NAGSA dehydrogenase family. Type 2 subfamily.</text>
</comment>
<reference key="1">
    <citation type="journal article" date="2000" name="DNA Res.">
        <title>Complete genome structure of the nitrogen-fixing symbiotic bacterium Mesorhizobium loti.</title>
        <authorList>
            <person name="Kaneko T."/>
            <person name="Nakamura Y."/>
            <person name="Sato S."/>
            <person name="Asamizu E."/>
            <person name="Kato T."/>
            <person name="Sasamoto S."/>
            <person name="Watanabe A."/>
            <person name="Idesawa K."/>
            <person name="Ishikawa A."/>
            <person name="Kawashima K."/>
            <person name="Kimura T."/>
            <person name="Kishida Y."/>
            <person name="Kiyokawa C."/>
            <person name="Kohara M."/>
            <person name="Matsumoto M."/>
            <person name="Matsuno A."/>
            <person name="Mochizuki Y."/>
            <person name="Nakayama S."/>
            <person name="Nakazaki N."/>
            <person name="Shimpo S."/>
            <person name="Sugimoto M."/>
            <person name="Takeuchi C."/>
            <person name="Yamada M."/>
            <person name="Tabata S."/>
        </authorList>
    </citation>
    <scope>NUCLEOTIDE SEQUENCE [LARGE SCALE GENOMIC DNA]</scope>
    <source>
        <strain>LMG 29417 / CECT 9101 / MAFF 303099</strain>
    </source>
</reference>